<keyword id="KW-0025">Alternative splicing</keyword>
<keyword id="KW-1015">Disulfide bond</keyword>
<keyword id="KW-0325">Glycoprotein</keyword>
<keyword id="KW-0328">Glycosyltransferase</keyword>
<keyword id="KW-0333">Golgi apparatus</keyword>
<keyword id="KW-0430">Lectin</keyword>
<keyword id="KW-0464">Manganese</keyword>
<keyword id="KW-0472">Membrane</keyword>
<keyword id="KW-0479">Metal-binding</keyword>
<keyword id="KW-1185">Reference proteome</keyword>
<keyword id="KW-0735">Signal-anchor</keyword>
<keyword id="KW-0808">Transferase</keyword>
<keyword id="KW-0812">Transmembrane</keyword>
<keyword id="KW-1133">Transmembrane helix</keyword>
<dbReference type="EC" id="2.4.1.-"/>
<dbReference type="EMBL" id="AF031843">
    <property type="protein sequence ID" value="AAC13679.1"/>
    <property type="molecule type" value="mRNA"/>
</dbReference>
<dbReference type="EMBL" id="AL117202">
    <property type="protein sequence ID" value="CAB57897.1"/>
    <property type="molecule type" value="Genomic_DNA"/>
</dbReference>
<dbReference type="EMBL" id="AL117202">
    <property type="protein sequence ID" value="CAI46621.1"/>
    <property type="molecule type" value="Genomic_DNA"/>
</dbReference>
<dbReference type="PIR" id="T31549">
    <property type="entry name" value="T31549"/>
</dbReference>
<dbReference type="RefSeq" id="NP_001022876.1">
    <molecule id="Q9U2C4-1"/>
    <property type="nucleotide sequence ID" value="NM_001027705.3"/>
</dbReference>
<dbReference type="RefSeq" id="NP_001022877.1">
    <property type="nucleotide sequence ID" value="NM_001027706.2"/>
</dbReference>
<dbReference type="RefSeq" id="NP_001370195.1">
    <molecule id="Q9U2C4-2"/>
    <property type="nucleotide sequence ID" value="NM_001382997.1"/>
</dbReference>
<dbReference type="SMR" id="Q9U2C4"/>
<dbReference type="FunCoup" id="Q9U2C4">
    <property type="interactions" value="958"/>
</dbReference>
<dbReference type="STRING" id="6239.Y47D3A.23a.1"/>
<dbReference type="CAZy" id="CBM13">
    <property type="family name" value="Carbohydrate-Binding Module Family 13"/>
</dbReference>
<dbReference type="CAZy" id="GT27">
    <property type="family name" value="Glycosyltransferase Family 27"/>
</dbReference>
<dbReference type="GlyCosmos" id="Q9U2C4">
    <property type="glycosylation" value="2 sites, No reported glycans"/>
</dbReference>
<dbReference type="PaxDb" id="6239-Y47D3A.23a"/>
<dbReference type="PeptideAtlas" id="Q9U2C4"/>
<dbReference type="EnsemblMetazoa" id="Y47D3A.23a.1">
    <molecule id="Q9U2C4-1"/>
    <property type="protein sequence ID" value="Y47D3A.23a.1"/>
    <property type="gene ID" value="WBGene00012934"/>
</dbReference>
<dbReference type="EnsemblMetazoa" id="Y47D3A.23b.1">
    <molecule id="Q9U2C4-2"/>
    <property type="protein sequence ID" value="Y47D3A.23b.1"/>
    <property type="gene ID" value="WBGene00012934"/>
</dbReference>
<dbReference type="GeneID" id="176557"/>
<dbReference type="KEGG" id="cel:CELE_Y47D3A.23"/>
<dbReference type="UCSC" id="Y47D3A.23a">
    <molecule id="Q9U2C4-1"/>
    <property type="organism name" value="c. elegans"/>
</dbReference>
<dbReference type="AGR" id="WB:WBGene00012934"/>
<dbReference type="CTD" id="176557"/>
<dbReference type="WormBase" id="Y47D3A.23a">
    <molecule id="Q9U2C4-1"/>
    <property type="protein sequence ID" value="CE24334"/>
    <property type="gene ID" value="WBGene00012934"/>
    <property type="gene designation" value="gly-9"/>
</dbReference>
<dbReference type="WormBase" id="Y47D3A.23b">
    <molecule id="Q9U2C4-2"/>
    <property type="protein sequence ID" value="CE37859"/>
    <property type="gene ID" value="WBGene00012934"/>
    <property type="gene designation" value="gly-9"/>
</dbReference>
<dbReference type="eggNOG" id="KOG3736">
    <property type="taxonomic scope" value="Eukaryota"/>
</dbReference>
<dbReference type="HOGENOM" id="CLU_013477_0_1_1"/>
<dbReference type="InParanoid" id="Q9U2C4"/>
<dbReference type="OMA" id="DLKFHPD"/>
<dbReference type="OrthoDB" id="6119243at2759"/>
<dbReference type="PhylomeDB" id="Q9U2C4"/>
<dbReference type="Reactome" id="R-CEL-913709">
    <property type="pathway name" value="O-linked glycosylation of mucins"/>
</dbReference>
<dbReference type="UniPathway" id="UPA00378"/>
<dbReference type="PRO" id="PR:Q9U2C4"/>
<dbReference type="Proteomes" id="UP000001940">
    <property type="component" value="Chromosome III"/>
</dbReference>
<dbReference type="Bgee" id="WBGene00012934">
    <property type="expression patterns" value="Expressed in adult organism and 3 other cell types or tissues"/>
</dbReference>
<dbReference type="GO" id="GO:0005794">
    <property type="term" value="C:Golgi apparatus"/>
    <property type="evidence" value="ECO:0000318"/>
    <property type="project" value="GO_Central"/>
</dbReference>
<dbReference type="GO" id="GO:0000139">
    <property type="term" value="C:Golgi membrane"/>
    <property type="evidence" value="ECO:0007669"/>
    <property type="project" value="UniProtKB-SubCell"/>
</dbReference>
<dbReference type="GO" id="GO:0030246">
    <property type="term" value="F:carbohydrate binding"/>
    <property type="evidence" value="ECO:0007669"/>
    <property type="project" value="UniProtKB-KW"/>
</dbReference>
<dbReference type="GO" id="GO:0046872">
    <property type="term" value="F:metal ion binding"/>
    <property type="evidence" value="ECO:0007669"/>
    <property type="project" value="UniProtKB-KW"/>
</dbReference>
<dbReference type="GO" id="GO:0004653">
    <property type="term" value="F:polypeptide N-acetylgalactosaminyltransferase activity"/>
    <property type="evidence" value="ECO:0000318"/>
    <property type="project" value="GO_Central"/>
</dbReference>
<dbReference type="GO" id="GO:0006493">
    <property type="term" value="P:protein O-linked glycosylation"/>
    <property type="evidence" value="ECO:0000318"/>
    <property type="project" value="GO_Central"/>
</dbReference>
<dbReference type="CDD" id="cd23459">
    <property type="entry name" value="beta-trefoil_Ricin_Pgant1-like"/>
    <property type="match status" value="1"/>
</dbReference>
<dbReference type="CDD" id="cd02510">
    <property type="entry name" value="pp-GalNAc-T"/>
    <property type="match status" value="1"/>
</dbReference>
<dbReference type="FunFam" id="2.80.10.50:FF:000095">
    <property type="entry name" value="Polypeptide N-acetylgalactosaminyltransferase"/>
    <property type="match status" value="1"/>
</dbReference>
<dbReference type="FunFam" id="3.90.550.10:FF:000021">
    <property type="entry name" value="Polypeptide N-acetylgalactosaminyltransferase"/>
    <property type="match status" value="1"/>
</dbReference>
<dbReference type="Gene3D" id="2.80.10.50">
    <property type="match status" value="1"/>
</dbReference>
<dbReference type="Gene3D" id="3.90.550.10">
    <property type="entry name" value="Spore Coat Polysaccharide Biosynthesis Protein SpsA, Chain A"/>
    <property type="match status" value="1"/>
</dbReference>
<dbReference type="InterPro" id="IPR045885">
    <property type="entry name" value="GalNAc-T"/>
</dbReference>
<dbReference type="InterPro" id="IPR001173">
    <property type="entry name" value="Glyco_trans_2-like"/>
</dbReference>
<dbReference type="InterPro" id="IPR029044">
    <property type="entry name" value="Nucleotide-diphossugar_trans"/>
</dbReference>
<dbReference type="InterPro" id="IPR035992">
    <property type="entry name" value="Ricin_B-like_lectins"/>
</dbReference>
<dbReference type="InterPro" id="IPR000772">
    <property type="entry name" value="Ricin_B_lectin"/>
</dbReference>
<dbReference type="PANTHER" id="PTHR11675">
    <property type="entry name" value="N-ACETYLGALACTOSAMINYLTRANSFERASE"/>
    <property type="match status" value="1"/>
</dbReference>
<dbReference type="PANTHER" id="PTHR11675:SF43">
    <property type="entry name" value="POLYPEPTIDE N-ACETYLGALACTOSAMINYLTRANSFERASE 1"/>
    <property type="match status" value="1"/>
</dbReference>
<dbReference type="Pfam" id="PF00535">
    <property type="entry name" value="Glycos_transf_2"/>
    <property type="match status" value="1"/>
</dbReference>
<dbReference type="Pfam" id="PF00652">
    <property type="entry name" value="Ricin_B_lectin"/>
    <property type="match status" value="1"/>
</dbReference>
<dbReference type="SMART" id="SM00458">
    <property type="entry name" value="RICIN"/>
    <property type="match status" value="1"/>
</dbReference>
<dbReference type="SUPFAM" id="SSF53448">
    <property type="entry name" value="Nucleotide-diphospho-sugar transferases"/>
    <property type="match status" value="1"/>
</dbReference>
<dbReference type="SUPFAM" id="SSF50370">
    <property type="entry name" value="Ricin B-like lectins"/>
    <property type="match status" value="1"/>
</dbReference>
<dbReference type="PROSITE" id="PS50231">
    <property type="entry name" value="RICIN_B_LECTIN"/>
    <property type="match status" value="1"/>
</dbReference>
<evidence type="ECO:0000250" key="1"/>
<evidence type="ECO:0000255" key="2"/>
<evidence type="ECO:0000255" key="3">
    <source>
        <dbReference type="PROSITE-ProRule" id="PRU00174"/>
    </source>
</evidence>
<evidence type="ECO:0000305" key="4"/>
<comment type="function">
    <text evidence="1">Probable glycopeptide transferase involved in O-linked oligosaccharide biosynthesis. Glycopeptide transferases catalyze the transfer of an N-acetyl-D-galactosamine residue to an already glycosylated peptide (By similarity). In contrast to other members of the family, it does not act as a peptide transferase that transfers GalNAc onto serine or threonine residue on peptides that have been tested. Some peptide transferase activity is however not excluded, considering that its appropriate peptide substrate may remain unidentified.</text>
</comment>
<comment type="cofactor">
    <cofactor evidence="1">
        <name>Mn(2+)</name>
        <dbReference type="ChEBI" id="CHEBI:29035"/>
    </cofactor>
</comment>
<comment type="pathway">
    <text>Protein modification; protein glycosylation.</text>
</comment>
<comment type="subcellular location">
    <subcellularLocation>
        <location evidence="1">Golgi apparatus membrane</location>
        <topology evidence="1">Single-pass type II membrane protein</topology>
    </subcellularLocation>
</comment>
<comment type="alternative products">
    <event type="alternative splicing"/>
    <isoform>
        <id>Q9U2C4-1</id>
        <name>a</name>
        <sequence type="displayed"/>
    </isoform>
    <isoform>
        <id>Q9U2C4-2</id>
        <name>b</name>
        <sequence type="described" ref="VSP_020151"/>
    </isoform>
</comment>
<comment type="domain">
    <text evidence="1">There are two conserved domains in the glycosyltransferase region: the N-terminal domain (domain A, also called GT1 motif), which is probably involved in manganese coordination and substrate binding and the C-terminal domain (domain B, also called Gal/GalNAc-T motif), which is probably involved in catalytic reaction and UDP-Gal binding.</text>
</comment>
<comment type="domain">
    <text evidence="1">The ricin B-type lectin domain binds to GalNAc and contributes to the glycopeptide specificity.</text>
</comment>
<comment type="similarity">
    <text evidence="4">Belongs to the glycosyltransferase 2 family. GalNAc-T subfamily.</text>
</comment>
<reference key="1">
    <citation type="journal article" date="1998" name="J. Biol. Chem.">
        <title>cDNA cloning and expression of a family of UDP-N-acetyl-D-galactosamine:polypeptide N-acetylgalactosaminyltransferase sequence homologs from Caenorhabditis elegans.</title>
        <authorList>
            <person name="Hagen F.K."/>
            <person name="Nehrke K."/>
        </authorList>
    </citation>
    <scope>NUCLEOTIDE SEQUENCE [MRNA] (ISOFORM A)</scope>
    <source>
        <strain>Bristol N2</strain>
    </source>
</reference>
<reference key="2">
    <citation type="journal article" date="1998" name="Science">
        <title>Genome sequence of the nematode C. elegans: a platform for investigating biology.</title>
        <authorList>
            <consortium name="The C. elegans sequencing consortium"/>
        </authorList>
    </citation>
    <scope>NUCLEOTIDE SEQUENCE [LARGE SCALE GENOMIC DNA]</scope>
    <scope>ALTERNATIVE SPLICING</scope>
    <source>
        <strain>Bristol N2</strain>
    </source>
</reference>
<organism>
    <name type="scientific">Caenorhabditis elegans</name>
    <dbReference type="NCBI Taxonomy" id="6239"/>
    <lineage>
        <taxon>Eukaryota</taxon>
        <taxon>Metazoa</taxon>
        <taxon>Ecdysozoa</taxon>
        <taxon>Nematoda</taxon>
        <taxon>Chromadorea</taxon>
        <taxon>Rhabditida</taxon>
        <taxon>Rhabditina</taxon>
        <taxon>Rhabditomorpha</taxon>
        <taxon>Rhabditoidea</taxon>
        <taxon>Rhabditidae</taxon>
        <taxon>Peloderinae</taxon>
        <taxon>Caenorhabditis</taxon>
    </lineage>
</organism>
<feature type="chain" id="PRO_0000059152" description="Probable N-acetylgalactosaminyltransferase 9">
    <location>
        <begin position="1"/>
        <end position="579"/>
    </location>
</feature>
<feature type="topological domain" description="Cytoplasmic" evidence="2">
    <location>
        <begin position="1"/>
        <end position="12"/>
    </location>
</feature>
<feature type="transmembrane region" description="Helical; Signal-anchor for type II membrane protein" evidence="2">
    <location>
        <begin position="13"/>
        <end position="30"/>
    </location>
</feature>
<feature type="topological domain" description="Lumenal" evidence="2">
    <location>
        <begin position="31"/>
        <end position="579"/>
    </location>
</feature>
<feature type="domain" description="Ricin B-type lectin" evidence="3">
    <location>
        <begin position="450"/>
        <end position="574"/>
    </location>
</feature>
<feature type="region of interest" description="Catalytic subdomain A">
    <location>
        <begin position="133"/>
        <end position="243"/>
    </location>
</feature>
<feature type="region of interest" description="Catalytic subdomain B">
    <location>
        <begin position="302"/>
        <end position="364"/>
    </location>
</feature>
<feature type="binding site" evidence="1">
    <location>
        <position position="174"/>
    </location>
    <ligand>
        <name>substrate</name>
    </ligand>
</feature>
<feature type="binding site" evidence="1">
    <location>
        <position position="204"/>
    </location>
    <ligand>
        <name>substrate</name>
    </ligand>
</feature>
<feature type="binding site" evidence="1">
    <location>
        <position position="227"/>
    </location>
    <ligand>
        <name>Mn(2+)</name>
        <dbReference type="ChEBI" id="CHEBI:29035"/>
    </ligand>
</feature>
<feature type="binding site" evidence="1">
    <location>
        <position position="228"/>
    </location>
    <ligand>
        <name>substrate</name>
    </ligand>
</feature>
<feature type="binding site" evidence="1">
    <location>
        <position position="229"/>
    </location>
    <ligand>
        <name>Mn(2+)</name>
        <dbReference type="ChEBI" id="CHEBI:29035"/>
    </ligand>
</feature>
<feature type="binding site" evidence="1">
    <location>
        <position position="333"/>
    </location>
    <ligand>
        <name>substrate</name>
    </ligand>
</feature>
<feature type="binding site" evidence="1">
    <location>
        <position position="361"/>
    </location>
    <ligand>
        <name>Mn(2+)</name>
        <dbReference type="ChEBI" id="CHEBI:29035"/>
    </ligand>
</feature>
<feature type="binding site" evidence="1">
    <location>
        <position position="364"/>
    </location>
    <ligand>
        <name>substrate</name>
    </ligand>
</feature>
<feature type="binding site" evidence="1">
    <location>
        <position position="367"/>
    </location>
    <ligand>
        <name>substrate</name>
    </ligand>
</feature>
<feature type="binding site" evidence="1">
    <location>
        <position position="369"/>
    </location>
    <ligand>
        <name>substrate</name>
    </ligand>
</feature>
<feature type="glycosylation site" description="N-linked (GlcNAc...) asparagine" evidence="2">
    <location>
        <position position="67"/>
    </location>
</feature>
<feature type="glycosylation site" description="N-linked (GlcNAc...) asparagine" evidence="2">
    <location>
        <position position="370"/>
    </location>
</feature>
<feature type="disulfide bond" evidence="3">
    <location>
        <begin position="123"/>
        <end position="356"/>
    </location>
</feature>
<feature type="disulfide bond" evidence="3">
    <location>
        <begin position="347"/>
        <end position="427"/>
    </location>
</feature>
<feature type="disulfide bond" evidence="3">
    <location>
        <begin position="464"/>
        <end position="483"/>
    </location>
</feature>
<feature type="disulfide bond" evidence="3">
    <location>
        <begin position="507"/>
        <end position="520"/>
    </location>
</feature>
<feature type="disulfide bond" evidence="3">
    <location>
        <begin position="545"/>
        <end position="562"/>
    </location>
</feature>
<feature type="splice variant" id="VSP_020151" description="In isoform b." evidence="4">
    <location>
        <begin position="1"/>
        <end position="254"/>
    </location>
</feature>
<feature type="sequence conflict" description="In Ref. 1; AAC13679." evidence="4" ref="1">
    <original>V</original>
    <variation>D</variation>
    <location>
        <position position="203"/>
    </location>
</feature>
<gene>
    <name type="primary">gly-9</name>
    <name type="ORF">Y47D3A.23</name>
</gene>
<protein>
    <recommendedName>
        <fullName>Probable N-acetylgalactosaminyltransferase 9</fullName>
        <ecNumber>2.4.1.-</ecNumber>
    </recommendedName>
    <alternativeName>
        <fullName>Protein-UDP acetylgalactosaminyltransferase 9</fullName>
    </alternativeName>
    <alternativeName>
        <fullName>UDP-GalNAc:polypeptide N-acetylgalactosaminyltransferase 9</fullName>
        <shortName>pp-GaNTase 9</shortName>
    </alternativeName>
</protein>
<sequence length="579" mass="66430">MLRYIIPRKKGTFVIAAFLTVAFFCIVAYHRNDRRRTKFQFPDIEKYAEELVRLPETWNGELHQIPNYTAPREGPGEKGKPVVLTGKDAELGQADMKKWFMNVHASDKISLDRDVPDPRIQACKDIKYDYAALPKTSVIIIFTDEAWTPLLRTVHSVINRSPPELLQEVILLDDNSKRQELQEPLDEHIKRFGGKVRLIRKHVRHGLIRAKLAGAREAVGDIIVFLDSHCEANHGWLEPIVQRISDERTAIVCPMIDSISDNTLAYHGDWSLSTGGFSWALHFTWEGLSEEEQKRRTKPTDYIRSPTMAGGLLAANREYFFEVGGYDEEMDIWGGENLEISFRAWMCGGSIEFIPCSHVGHIFRAGHPYNMTGRNNNKDVHGTNSKRLAEVWMDDYKRLYYMHREDLRTKDVGDLTARHELRKRLNCKPFKWFLDNIAKGKFIMDEDVVAYGALHTVVSGTRMCTDTLQRDEKMSQLLGVFHCQGKGSSPQLMSLSKEGNLRRENTCASEENGNIRMKTCSKKAQFNERWAYENKMIRNLKSGKCMSTANLKPGDNAIVVECDEKDEHQKWNFIDPAKA</sequence>
<accession>Q9U2C4</accession>
<accession>O61398</accession>
<accession>Q5GMH7</accession>
<name>GALT9_CAEEL</name>
<proteinExistence type="evidence at transcript level"/>